<gene>
    <name evidence="1" type="primary">prmC</name>
    <name type="ordered locus">DR_0245</name>
</gene>
<reference key="1">
    <citation type="journal article" date="1999" name="Science">
        <title>Genome sequence of the radioresistant bacterium Deinococcus radiodurans R1.</title>
        <authorList>
            <person name="White O."/>
            <person name="Eisen J.A."/>
            <person name="Heidelberg J.F."/>
            <person name="Hickey E.K."/>
            <person name="Peterson J.D."/>
            <person name="Dodson R.J."/>
            <person name="Haft D.H."/>
            <person name="Gwinn M.L."/>
            <person name="Nelson W.C."/>
            <person name="Richardson D.L."/>
            <person name="Moffat K.S."/>
            <person name="Qin H."/>
            <person name="Jiang L."/>
            <person name="Pamphile W."/>
            <person name="Crosby M."/>
            <person name="Shen M."/>
            <person name="Vamathevan J.J."/>
            <person name="Lam P."/>
            <person name="McDonald L.A."/>
            <person name="Utterback T.R."/>
            <person name="Zalewski C."/>
            <person name="Makarova K.S."/>
            <person name="Aravind L."/>
            <person name="Daly M.J."/>
            <person name="Minton K.W."/>
            <person name="Fleischmann R.D."/>
            <person name="Ketchum K.A."/>
            <person name="Nelson K.E."/>
            <person name="Salzberg S.L."/>
            <person name="Smith H.O."/>
            <person name="Venter J.C."/>
            <person name="Fraser C.M."/>
        </authorList>
    </citation>
    <scope>NUCLEOTIDE SEQUENCE [LARGE SCALE GENOMIC DNA]</scope>
    <source>
        <strain>ATCC 13939 / DSM 20539 / JCM 16871 / CCUG 27074 / LMG 4051 / NBRC 15346 / NCIMB 9279 / VKM B-1422 / R1</strain>
    </source>
</reference>
<name>PRMC_DEIRA</name>
<accession>Q9RXR2</accession>
<keyword id="KW-0489">Methyltransferase</keyword>
<keyword id="KW-1185">Reference proteome</keyword>
<keyword id="KW-0949">S-adenosyl-L-methionine</keyword>
<keyword id="KW-0808">Transferase</keyword>
<sequence length="278" mass="29677">MQLRDLLTQATARLTRAGVPSPEVDARLLLEHVLGLNRTAFLLRGGEEIGPDAEARAWDSIERRAARVPLQHLTGEVEWGGVRLTSDARALVPRPETEWLLHLALEELRRVEKPRVLDVGTGTGALALGLKAAIPQAEVTATDLSPEALSLARENAALSGLDVKFVEGSLLAGLSGPFNLIVSNPPYLPTADRATADPEVRHDPDLALYAGEDGLDVARPLVAEAAAALVPGGALLLELDPRNAPTLAAELRTAGWQAEVRPDLTGRERFVRARRAGG</sequence>
<comment type="function">
    <text evidence="1">Methylates the class 1 translation termination release factors RF1/PrfA and RF2/PrfB on the glutamine residue of the universally conserved GGQ motif.</text>
</comment>
<comment type="catalytic activity">
    <reaction evidence="1">
        <text>L-glutaminyl-[peptide chain release factor] + S-adenosyl-L-methionine = N(5)-methyl-L-glutaminyl-[peptide chain release factor] + S-adenosyl-L-homocysteine + H(+)</text>
        <dbReference type="Rhea" id="RHEA:42896"/>
        <dbReference type="Rhea" id="RHEA-COMP:10271"/>
        <dbReference type="Rhea" id="RHEA-COMP:10272"/>
        <dbReference type="ChEBI" id="CHEBI:15378"/>
        <dbReference type="ChEBI" id="CHEBI:30011"/>
        <dbReference type="ChEBI" id="CHEBI:57856"/>
        <dbReference type="ChEBI" id="CHEBI:59789"/>
        <dbReference type="ChEBI" id="CHEBI:61891"/>
        <dbReference type="EC" id="2.1.1.297"/>
    </reaction>
</comment>
<comment type="similarity">
    <text evidence="1">Belongs to the protein N5-glutamine methyltransferase family. PrmC subfamily.</text>
</comment>
<proteinExistence type="inferred from homology"/>
<feature type="chain" id="PRO_0000414517" description="Release factor glutamine methyltransferase">
    <location>
        <begin position="1"/>
        <end position="278"/>
    </location>
</feature>
<feature type="binding site" evidence="1">
    <location>
        <begin position="120"/>
        <end position="124"/>
    </location>
    <ligand>
        <name>S-adenosyl-L-methionine</name>
        <dbReference type="ChEBI" id="CHEBI:59789"/>
    </ligand>
</feature>
<feature type="binding site" evidence="1">
    <location>
        <position position="143"/>
    </location>
    <ligand>
        <name>S-adenosyl-L-methionine</name>
        <dbReference type="ChEBI" id="CHEBI:59789"/>
    </ligand>
</feature>
<feature type="binding site" evidence="1">
    <location>
        <begin position="184"/>
        <end position="187"/>
    </location>
    <ligand>
        <name>substrate</name>
    </ligand>
</feature>
<feature type="binding site" evidence="1">
    <location>
        <position position="184"/>
    </location>
    <ligand>
        <name>S-adenosyl-L-methionine</name>
        <dbReference type="ChEBI" id="CHEBI:59789"/>
    </ligand>
</feature>
<protein>
    <recommendedName>
        <fullName evidence="1">Release factor glutamine methyltransferase</fullName>
        <shortName evidence="1">RF MTase</shortName>
        <ecNumber evidence="1">2.1.1.297</ecNumber>
    </recommendedName>
    <alternativeName>
        <fullName evidence="1">N5-glutamine methyltransferase PrmC</fullName>
    </alternativeName>
    <alternativeName>
        <fullName evidence="1">Protein-(glutamine-N5) MTase PrmC</fullName>
    </alternativeName>
    <alternativeName>
        <fullName evidence="1">Protein-glutamine N-methyltransferase PrmC</fullName>
    </alternativeName>
</protein>
<dbReference type="EC" id="2.1.1.297" evidence="1"/>
<dbReference type="EMBL" id="AE000513">
    <property type="protein sequence ID" value="AAF09827.1"/>
    <property type="molecule type" value="Genomic_DNA"/>
</dbReference>
<dbReference type="PIR" id="D75544">
    <property type="entry name" value="D75544"/>
</dbReference>
<dbReference type="RefSeq" id="NP_293969.1">
    <property type="nucleotide sequence ID" value="NC_001263.1"/>
</dbReference>
<dbReference type="RefSeq" id="WP_010886891.1">
    <property type="nucleotide sequence ID" value="NC_001263.1"/>
</dbReference>
<dbReference type="SMR" id="Q9RXR2"/>
<dbReference type="FunCoup" id="Q9RXR2">
    <property type="interactions" value="459"/>
</dbReference>
<dbReference type="STRING" id="243230.DR_0245"/>
<dbReference type="PaxDb" id="243230-DR_0245"/>
<dbReference type="EnsemblBacteria" id="AAF09827">
    <property type="protein sequence ID" value="AAF09827"/>
    <property type="gene ID" value="DR_0245"/>
</dbReference>
<dbReference type="GeneID" id="69516475"/>
<dbReference type="KEGG" id="dra:DR_0245"/>
<dbReference type="PATRIC" id="fig|243230.17.peg.409"/>
<dbReference type="eggNOG" id="COG2890">
    <property type="taxonomic scope" value="Bacteria"/>
</dbReference>
<dbReference type="HOGENOM" id="CLU_018398_3_1_0"/>
<dbReference type="InParanoid" id="Q9RXR2"/>
<dbReference type="OrthoDB" id="9800643at2"/>
<dbReference type="Proteomes" id="UP000002524">
    <property type="component" value="Chromosome 1"/>
</dbReference>
<dbReference type="GO" id="GO:0003676">
    <property type="term" value="F:nucleic acid binding"/>
    <property type="evidence" value="ECO:0007669"/>
    <property type="project" value="InterPro"/>
</dbReference>
<dbReference type="GO" id="GO:0102559">
    <property type="term" value="F:protein-(glutamine-N5) methyltransferase activity"/>
    <property type="evidence" value="ECO:0007669"/>
    <property type="project" value="UniProtKB-EC"/>
</dbReference>
<dbReference type="GO" id="GO:0036009">
    <property type="term" value="F:protein-glutamine N-methyltransferase activity"/>
    <property type="evidence" value="ECO:0000318"/>
    <property type="project" value="GO_Central"/>
</dbReference>
<dbReference type="GO" id="GO:0032259">
    <property type="term" value="P:methylation"/>
    <property type="evidence" value="ECO:0007669"/>
    <property type="project" value="UniProtKB-KW"/>
</dbReference>
<dbReference type="GO" id="GO:0006415">
    <property type="term" value="P:translational termination"/>
    <property type="evidence" value="ECO:0000318"/>
    <property type="project" value="GO_Central"/>
</dbReference>
<dbReference type="CDD" id="cd02440">
    <property type="entry name" value="AdoMet_MTases"/>
    <property type="match status" value="1"/>
</dbReference>
<dbReference type="Gene3D" id="1.10.8.10">
    <property type="entry name" value="DNA helicase RuvA subunit, C-terminal domain"/>
    <property type="match status" value="1"/>
</dbReference>
<dbReference type="Gene3D" id="3.40.50.150">
    <property type="entry name" value="Vaccinia Virus protein VP39"/>
    <property type="match status" value="1"/>
</dbReference>
<dbReference type="HAMAP" id="MF_02126">
    <property type="entry name" value="RF_methyltr_PrmC"/>
    <property type="match status" value="1"/>
</dbReference>
<dbReference type="InterPro" id="IPR002052">
    <property type="entry name" value="DNA_methylase_N6_adenine_CS"/>
</dbReference>
<dbReference type="InterPro" id="IPR004556">
    <property type="entry name" value="HemK-like"/>
</dbReference>
<dbReference type="InterPro" id="IPR050320">
    <property type="entry name" value="N5-glutamine_MTase"/>
</dbReference>
<dbReference type="InterPro" id="IPR040758">
    <property type="entry name" value="PrmC_N"/>
</dbReference>
<dbReference type="InterPro" id="IPR019874">
    <property type="entry name" value="RF_methyltr_PrmC"/>
</dbReference>
<dbReference type="InterPro" id="IPR029063">
    <property type="entry name" value="SAM-dependent_MTases_sf"/>
</dbReference>
<dbReference type="InterPro" id="IPR007848">
    <property type="entry name" value="Small_mtfrase_dom"/>
</dbReference>
<dbReference type="NCBIfam" id="TIGR00536">
    <property type="entry name" value="hemK_fam"/>
    <property type="match status" value="1"/>
</dbReference>
<dbReference type="NCBIfam" id="TIGR03534">
    <property type="entry name" value="RF_mod_PrmC"/>
    <property type="match status" value="1"/>
</dbReference>
<dbReference type="PANTHER" id="PTHR18895">
    <property type="entry name" value="HEMK METHYLTRANSFERASE"/>
    <property type="match status" value="1"/>
</dbReference>
<dbReference type="PANTHER" id="PTHR18895:SF74">
    <property type="entry name" value="MTRF1L RELEASE FACTOR GLUTAMINE METHYLTRANSFERASE"/>
    <property type="match status" value="1"/>
</dbReference>
<dbReference type="Pfam" id="PF05175">
    <property type="entry name" value="MTS"/>
    <property type="match status" value="1"/>
</dbReference>
<dbReference type="Pfam" id="PF17827">
    <property type="entry name" value="PrmC_N"/>
    <property type="match status" value="1"/>
</dbReference>
<dbReference type="SUPFAM" id="SSF53335">
    <property type="entry name" value="S-adenosyl-L-methionine-dependent methyltransferases"/>
    <property type="match status" value="1"/>
</dbReference>
<evidence type="ECO:0000255" key="1">
    <source>
        <dbReference type="HAMAP-Rule" id="MF_02126"/>
    </source>
</evidence>
<organism>
    <name type="scientific">Deinococcus radiodurans (strain ATCC 13939 / DSM 20539 / JCM 16871 / CCUG 27074 / LMG 4051 / NBRC 15346 / NCIMB 9279 / VKM B-1422 / R1)</name>
    <dbReference type="NCBI Taxonomy" id="243230"/>
    <lineage>
        <taxon>Bacteria</taxon>
        <taxon>Thermotogati</taxon>
        <taxon>Deinococcota</taxon>
        <taxon>Deinococci</taxon>
        <taxon>Deinococcales</taxon>
        <taxon>Deinococcaceae</taxon>
        <taxon>Deinococcus</taxon>
    </lineage>
</organism>